<organism>
    <name type="scientific">Arabidopsis thaliana</name>
    <name type="common">Mouse-ear cress</name>
    <dbReference type="NCBI Taxonomy" id="3702"/>
    <lineage>
        <taxon>Eukaryota</taxon>
        <taxon>Viridiplantae</taxon>
        <taxon>Streptophyta</taxon>
        <taxon>Embryophyta</taxon>
        <taxon>Tracheophyta</taxon>
        <taxon>Spermatophyta</taxon>
        <taxon>Magnoliopsida</taxon>
        <taxon>eudicotyledons</taxon>
        <taxon>Gunneridae</taxon>
        <taxon>Pentapetalae</taxon>
        <taxon>rosids</taxon>
        <taxon>malvids</taxon>
        <taxon>Brassicales</taxon>
        <taxon>Brassicaceae</taxon>
        <taxon>Camelineae</taxon>
        <taxon>Arabidopsis</taxon>
    </lineage>
</organism>
<accession>Q9M1X9</accession>
<proteinExistence type="inferred from homology"/>
<feature type="chain" id="PRO_0000233373" description="Putative histone-lysine N-methyltransferase ASHH4">
    <location>
        <begin position="1"/>
        <end position="352"/>
    </location>
</feature>
<feature type="domain" description="AWS" evidence="4">
    <location>
        <begin position="60"/>
        <end position="109"/>
    </location>
</feature>
<feature type="domain" description="SET" evidence="3">
    <location>
        <begin position="111"/>
        <end position="228"/>
    </location>
</feature>
<feature type="domain" description="Post-SET" evidence="2">
    <location>
        <begin position="234"/>
        <end position="250"/>
    </location>
</feature>
<sequence>MSSSKKGSDRNQIRKSLRKLKKQIGELEKLESPDRLNNVKPIFIKRNIYLKKKLKKKVKDHGIFCSCSLDPGSSTLCGSDCNCGILLSSCSSSCKCSSECTNKPFQQRHIKKMKLVQTEKCGYGIVADEDINSGEFIIEYVGEVIDDKICEERLWKLNHKVETNFYLCQINWNMVIDATHKGNKSRYINHSCSPNTEMQKWIIDGETRIGIFATRFINKGEQLTYDYQFVQFGADQDCYCGAVCCRKKLGAKPCKTKNTTLEEAVKPVACKVTWKTPKLLNSEVRETNLDASGQAWNNHSQRKICCRDCIGAYYTAQMKVLTLVVDIFQVMYEDGVTEIIDMCREVWKVVTA</sequence>
<keyword id="KW-0137">Centromere</keyword>
<keyword id="KW-0156">Chromatin regulator</keyword>
<keyword id="KW-0158">Chromosome</keyword>
<keyword id="KW-0489">Methyltransferase</keyword>
<keyword id="KW-0539">Nucleus</keyword>
<keyword id="KW-1185">Reference proteome</keyword>
<keyword id="KW-0949">S-adenosyl-L-methionine</keyword>
<keyword id="KW-0808">Transferase</keyword>
<reference key="1">
    <citation type="journal article" date="2000" name="Nature">
        <title>Sequence and analysis of chromosome 3 of the plant Arabidopsis thaliana.</title>
        <authorList>
            <person name="Salanoubat M."/>
            <person name="Lemcke K."/>
            <person name="Rieger M."/>
            <person name="Ansorge W."/>
            <person name="Unseld M."/>
            <person name="Fartmann B."/>
            <person name="Valle G."/>
            <person name="Bloecker H."/>
            <person name="Perez-Alonso M."/>
            <person name="Obermaier B."/>
            <person name="Delseny M."/>
            <person name="Boutry M."/>
            <person name="Grivell L.A."/>
            <person name="Mache R."/>
            <person name="Puigdomenech P."/>
            <person name="De Simone V."/>
            <person name="Choisne N."/>
            <person name="Artiguenave F."/>
            <person name="Robert C."/>
            <person name="Brottier P."/>
            <person name="Wincker P."/>
            <person name="Cattolico L."/>
            <person name="Weissenbach J."/>
            <person name="Saurin W."/>
            <person name="Quetier F."/>
            <person name="Schaefer M."/>
            <person name="Mueller-Auer S."/>
            <person name="Gabel C."/>
            <person name="Fuchs M."/>
            <person name="Benes V."/>
            <person name="Wurmbach E."/>
            <person name="Drzonek H."/>
            <person name="Erfle H."/>
            <person name="Jordan N."/>
            <person name="Bangert S."/>
            <person name="Wiedelmann R."/>
            <person name="Kranz H."/>
            <person name="Voss H."/>
            <person name="Holland R."/>
            <person name="Brandt P."/>
            <person name="Nyakatura G."/>
            <person name="Vezzi A."/>
            <person name="D'Angelo M."/>
            <person name="Pallavicini A."/>
            <person name="Toppo S."/>
            <person name="Simionati B."/>
            <person name="Conrad A."/>
            <person name="Hornischer K."/>
            <person name="Kauer G."/>
            <person name="Loehnert T.-H."/>
            <person name="Nordsiek G."/>
            <person name="Reichelt J."/>
            <person name="Scharfe M."/>
            <person name="Schoen O."/>
            <person name="Bargues M."/>
            <person name="Terol J."/>
            <person name="Climent J."/>
            <person name="Navarro P."/>
            <person name="Collado C."/>
            <person name="Perez-Perez A."/>
            <person name="Ottenwaelder B."/>
            <person name="Duchemin D."/>
            <person name="Cooke R."/>
            <person name="Laudie M."/>
            <person name="Berger-Llauro C."/>
            <person name="Purnelle B."/>
            <person name="Masuy D."/>
            <person name="de Haan M."/>
            <person name="Maarse A.C."/>
            <person name="Alcaraz J.-P."/>
            <person name="Cottet A."/>
            <person name="Casacuberta E."/>
            <person name="Monfort A."/>
            <person name="Argiriou A."/>
            <person name="Flores M."/>
            <person name="Liguori R."/>
            <person name="Vitale D."/>
            <person name="Mannhaupt G."/>
            <person name="Haase D."/>
            <person name="Schoof H."/>
            <person name="Rudd S."/>
            <person name="Zaccaria P."/>
            <person name="Mewes H.-W."/>
            <person name="Mayer K.F.X."/>
            <person name="Kaul S."/>
            <person name="Town C.D."/>
            <person name="Koo H.L."/>
            <person name="Tallon L.J."/>
            <person name="Jenkins J."/>
            <person name="Rooney T."/>
            <person name="Rizzo M."/>
            <person name="Walts A."/>
            <person name="Utterback T."/>
            <person name="Fujii C.Y."/>
            <person name="Shea T.P."/>
            <person name="Creasy T.H."/>
            <person name="Haas B."/>
            <person name="Maiti R."/>
            <person name="Wu D."/>
            <person name="Peterson J."/>
            <person name="Van Aken S."/>
            <person name="Pai G."/>
            <person name="Militscher J."/>
            <person name="Sellers P."/>
            <person name="Gill J.E."/>
            <person name="Feldblyum T.V."/>
            <person name="Preuss D."/>
            <person name="Lin X."/>
            <person name="Nierman W.C."/>
            <person name="Salzberg S.L."/>
            <person name="White O."/>
            <person name="Venter J.C."/>
            <person name="Fraser C.M."/>
            <person name="Kaneko T."/>
            <person name="Nakamura Y."/>
            <person name="Sato S."/>
            <person name="Kato T."/>
            <person name="Asamizu E."/>
            <person name="Sasamoto S."/>
            <person name="Kimura T."/>
            <person name="Idesawa K."/>
            <person name="Kawashima K."/>
            <person name="Kishida Y."/>
            <person name="Kiyokawa C."/>
            <person name="Kohara M."/>
            <person name="Matsumoto M."/>
            <person name="Matsuno A."/>
            <person name="Muraki A."/>
            <person name="Nakayama S."/>
            <person name="Nakazaki N."/>
            <person name="Shinpo S."/>
            <person name="Takeuchi C."/>
            <person name="Wada T."/>
            <person name="Watanabe A."/>
            <person name="Yamada M."/>
            <person name="Yasuda M."/>
            <person name="Tabata S."/>
        </authorList>
    </citation>
    <scope>NUCLEOTIDE SEQUENCE [LARGE SCALE GENOMIC DNA]</scope>
    <source>
        <strain>cv. Columbia</strain>
    </source>
</reference>
<reference key="2">
    <citation type="journal article" date="2017" name="Plant J.">
        <title>Araport11: a complete reannotation of the Arabidopsis thaliana reference genome.</title>
        <authorList>
            <person name="Cheng C.Y."/>
            <person name="Krishnakumar V."/>
            <person name="Chan A.P."/>
            <person name="Thibaud-Nissen F."/>
            <person name="Schobel S."/>
            <person name="Town C.D."/>
        </authorList>
    </citation>
    <scope>GENOME REANNOTATION</scope>
    <source>
        <strain>cv. Columbia</strain>
    </source>
</reference>
<reference key="3">
    <citation type="journal article" date="2001" name="Nucleic Acids Res.">
        <title>The Arabidopsis thaliana genome contains at least 29 active genes encoding SET domain proteins that can be assigned to four evolutionarily conserved classes.</title>
        <authorList>
            <person name="Baumbusch L.O."/>
            <person name="Thorstensen T."/>
            <person name="Krauss V."/>
            <person name="Fischer A."/>
            <person name="Naumann K."/>
            <person name="Assalkhou R."/>
            <person name="Schulz I."/>
            <person name="Reuter G."/>
            <person name="Aalen R.B."/>
        </authorList>
    </citation>
    <scope>NOMENCLATURE</scope>
</reference>
<protein>
    <recommendedName>
        <fullName>Putative histone-lysine N-methyltransferase ASHH4</fullName>
        <ecNumber>2.1.1.-</ecNumber>
    </recommendedName>
    <alternativeName>
        <fullName>ASH1 homolog 4</fullName>
    </alternativeName>
    <alternativeName>
        <fullName>Protein SET DOMAIN GROUP 24</fullName>
    </alternativeName>
</protein>
<evidence type="ECO:0000250" key="1"/>
<evidence type="ECO:0000255" key="2">
    <source>
        <dbReference type="PROSITE-ProRule" id="PRU00155"/>
    </source>
</evidence>
<evidence type="ECO:0000255" key="3">
    <source>
        <dbReference type="PROSITE-ProRule" id="PRU00190"/>
    </source>
</evidence>
<evidence type="ECO:0000255" key="4">
    <source>
        <dbReference type="PROSITE-ProRule" id="PRU00562"/>
    </source>
</evidence>
<evidence type="ECO:0000255" key="5">
    <source>
        <dbReference type="PROSITE-ProRule" id="PRU00911"/>
    </source>
</evidence>
<dbReference type="EC" id="2.1.1.-"/>
<dbReference type="EMBL" id="AL138647">
    <property type="protein sequence ID" value="CAB75815.1"/>
    <property type="molecule type" value="Genomic_DNA"/>
</dbReference>
<dbReference type="EMBL" id="CP002686">
    <property type="status" value="NOT_ANNOTATED_CDS"/>
    <property type="molecule type" value="Genomic_DNA"/>
</dbReference>
<dbReference type="PIR" id="T47820">
    <property type="entry name" value="T47820"/>
</dbReference>
<dbReference type="SMR" id="Q9M1X9"/>
<dbReference type="FunCoup" id="Q9M1X9">
    <property type="interactions" value="1"/>
</dbReference>
<dbReference type="STRING" id="3702.Q9M1X9"/>
<dbReference type="PaxDb" id="3702-AT3G59960.1"/>
<dbReference type="Araport" id="AT3G59960"/>
<dbReference type="TAIR" id="AT3G59960">
    <property type="gene designation" value="ASHH4"/>
</dbReference>
<dbReference type="eggNOG" id="KOG1081">
    <property type="taxonomic scope" value="Eukaryota"/>
</dbReference>
<dbReference type="HOGENOM" id="CLU_020840_1_0_1"/>
<dbReference type="InParanoid" id="Q9M1X9"/>
<dbReference type="PhylomeDB" id="Q9M1X9"/>
<dbReference type="PRO" id="PR:Q9M1X9"/>
<dbReference type="Proteomes" id="UP000006548">
    <property type="component" value="Chromosome 3"/>
</dbReference>
<dbReference type="ExpressionAtlas" id="Q9M1X9">
    <property type="expression patterns" value="baseline"/>
</dbReference>
<dbReference type="GO" id="GO:0000785">
    <property type="term" value="C:chromatin"/>
    <property type="evidence" value="ECO:0000318"/>
    <property type="project" value="GO_Central"/>
</dbReference>
<dbReference type="GO" id="GO:0000775">
    <property type="term" value="C:chromosome, centromeric region"/>
    <property type="evidence" value="ECO:0007669"/>
    <property type="project" value="UniProtKB-SubCell"/>
</dbReference>
<dbReference type="GO" id="GO:0005634">
    <property type="term" value="C:nucleus"/>
    <property type="evidence" value="ECO:0000318"/>
    <property type="project" value="GO_Central"/>
</dbReference>
<dbReference type="GO" id="GO:0046975">
    <property type="term" value="F:histone H3K36 methyltransferase activity"/>
    <property type="evidence" value="ECO:0000318"/>
    <property type="project" value="GO_Central"/>
</dbReference>
<dbReference type="GO" id="GO:0032259">
    <property type="term" value="P:methylation"/>
    <property type="evidence" value="ECO:0007669"/>
    <property type="project" value="UniProtKB-KW"/>
</dbReference>
<dbReference type="GO" id="GO:0006355">
    <property type="term" value="P:regulation of DNA-templated transcription"/>
    <property type="evidence" value="ECO:0000318"/>
    <property type="project" value="GO_Central"/>
</dbReference>
<dbReference type="CDD" id="cd19175">
    <property type="entry name" value="SET_ASHR3-like"/>
    <property type="match status" value="1"/>
</dbReference>
<dbReference type="FunFam" id="2.170.270.10:FF:000034">
    <property type="entry name" value="Histone-lysine N-methyltransferase"/>
    <property type="match status" value="1"/>
</dbReference>
<dbReference type="Gene3D" id="2.170.270.10">
    <property type="entry name" value="SET domain"/>
    <property type="match status" value="1"/>
</dbReference>
<dbReference type="InterPro" id="IPR047893">
    <property type="entry name" value="ASHR3-like_SET"/>
</dbReference>
<dbReference type="InterPro" id="IPR006560">
    <property type="entry name" value="AWS_dom"/>
</dbReference>
<dbReference type="InterPro" id="IPR025787">
    <property type="entry name" value="Hist-Lys_N-MeTrfase_SET2_plant"/>
</dbReference>
<dbReference type="InterPro" id="IPR003616">
    <property type="entry name" value="Post-SET_dom"/>
</dbReference>
<dbReference type="InterPro" id="IPR050777">
    <property type="entry name" value="SET2_Histone-Lys_MeTrsfase"/>
</dbReference>
<dbReference type="InterPro" id="IPR001214">
    <property type="entry name" value="SET_dom"/>
</dbReference>
<dbReference type="InterPro" id="IPR046341">
    <property type="entry name" value="SET_dom_sf"/>
</dbReference>
<dbReference type="PANTHER" id="PTHR22884">
    <property type="entry name" value="SET DOMAIN PROTEINS"/>
    <property type="match status" value="1"/>
</dbReference>
<dbReference type="Pfam" id="PF00856">
    <property type="entry name" value="SET"/>
    <property type="match status" value="1"/>
</dbReference>
<dbReference type="SMART" id="SM00570">
    <property type="entry name" value="AWS"/>
    <property type="match status" value="1"/>
</dbReference>
<dbReference type="SMART" id="SM00508">
    <property type="entry name" value="PostSET"/>
    <property type="match status" value="1"/>
</dbReference>
<dbReference type="SMART" id="SM00317">
    <property type="entry name" value="SET"/>
    <property type="match status" value="1"/>
</dbReference>
<dbReference type="SUPFAM" id="SSF82199">
    <property type="entry name" value="SET domain"/>
    <property type="match status" value="1"/>
</dbReference>
<dbReference type="PROSITE" id="PS51215">
    <property type="entry name" value="AWS"/>
    <property type="match status" value="1"/>
</dbReference>
<dbReference type="PROSITE" id="PS50868">
    <property type="entry name" value="POST_SET"/>
    <property type="match status" value="1"/>
</dbReference>
<dbReference type="PROSITE" id="PS51578">
    <property type="entry name" value="SAM_MT43_SET2_2"/>
    <property type="match status" value="1"/>
</dbReference>
<dbReference type="PROSITE" id="PS50280">
    <property type="entry name" value="SET"/>
    <property type="match status" value="1"/>
</dbReference>
<name>ASHH4_ARATH</name>
<comment type="function">
    <text evidence="1">Histone methyltransferase.</text>
</comment>
<comment type="catalytic activity">
    <reaction evidence="5">
        <text>L-lysyl-[histone] + S-adenosyl-L-methionine = N(6)-methyl-L-lysyl-[histone] + S-adenosyl-L-homocysteine + H(+)</text>
        <dbReference type="Rhea" id="RHEA:10024"/>
        <dbReference type="Rhea" id="RHEA-COMP:9845"/>
        <dbReference type="Rhea" id="RHEA-COMP:9846"/>
        <dbReference type="ChEBI" id="CHEBI:15378"/>
        <dbReference type="ChEBI" id="CHEBI:29969"/>
        <dbReference type="ChEBI" id="CHEBI:57856"/>
        <dbReference type="ChEBI" id="CHEBI:59789"/>
        <dbReference type="ChEBI" id="CHEBI:61929"/>
    </reaction>
</comment>
<comment type="subcellular location">
    <subcellularLocation>
        <location evidence="1">Nucleus</location>
    </subcellularLocation>
    <subcellularLocation>
        <location evidence="1">Chromosome</location>
        <location evidence="1">Centromere</location>
    </subcellularLocation>
    <text evidence="1">Associates with centromeric constitutive heterochromatin.</text>
</comment>
<comment type="similarity">
    <text evidence="5">Belongs to the class V-like SAM-binding methyltransferase superfamily. Histone-lysine methyltransferase family. SET2 subfamily.</text>
</comment>
<gene>
    <name type="primary">ASHH4</name>
    <name type="synonym">SDG24</name>
    <name type="synonym">SET24</name>
    <name type="ordered locus">At3g59960</name>
    <name type="ORF">F24G16.230</name>
</gene>